<name>RHAA_ECOSE</name>
<organism>
    <name type="scientific">Escherichia coli (strain SE11)</name>
    <dbReference type="NCBI Taxonomy" id="409438"/>
    <lineage>
        <taxon>Bacteria</taxon>
        <taxon>Pseudomonadati</taxon>
        <taxon>Pseudomonadota</taxon>
        <taxon>Gammaproteobacteria</taxon>
        <taxon>Enterobacterales</taxon>
        <taxon>Enterobacteriaceae</taxon>
        <taxon>Escherichia</taxon>
    </lineage>
</organism>
<proteinExistence type="inferred from homology"/>
<comment type="function">
    <text evidence="1">Catalyzes the interconversion of L-rhamnose and L-rhamnulose.</text>
</comment>
<comment type="catalytic activity">
    <reaction evidence="1">
        <text>L-rhamnopyranose = L-rhamnulose</text>
        <dbReference type="Rhea" id="RHEA:23160"/>
        <dbReference type="ChEBI" id="CHEBI:17897"/>
        <dbReference type="ChEBI" id="CHEBI:62346"/>
        <dbReference type="EC" id="5.3.1.14"/>
    </reaction>
</comment>
<comment type="cofactor">
    <cofactor evidence="1">
        <name>Mn(2+)</name>
        <dbReference type="ChEBI" id="CHEBI:29035"/>
    </cofactor>
    <text evidence="1">Binds 1 Mn(2+) ion per subunit.</text>
</comment>
<comment type="pathway">
    <text evidence="1">Carbohydrate degradation; L-rhamnose degradation; glycerone phosphate from L-rhamnose: step 1/3.</text>
</comment>
<comment type="subunit">
    <text evidence="1">Homotetramer.</text>
</comment>
<comment type="subcellular location">
    <subcellularLocation>
        <location evidence="1">Cytoplasm</location>
    </subcellularLocation>
</comment>
<comment type="similarity">
    <text evidence="1">Belongs to the rhamnose isomerase family.</text>
</comment>
<accession>B6I4P5</accession>
<feature type="chain" id="PRO_1000128882" description="L-rhamnose isomerase">
    <location>
        <begin position="1"/>
        <end position="419"/>
    </location>
</feature>
<feature type="binding site" evidence="1">
    <location>
        <position position="262"/>
    </location>
    <ligand>
        <name>Mn(2+)</name>
        <dbReference type="ChEBI" id="CHEBI:29035"/>
    </ligand>
</feature>
<feature type="binding site" evidence="1">
    <location>
        <position position="294"/>
    </location>
    <ligand>
        <name>Mn(2+)</name>
        <dbReference type="ChEBI" id="CHEBI:29035"/>
    </ligand>
</feature>
<feature type="binding site" evidence="1">
    <location>
        <position position="296"/>
    </location>
    <ligand>
        <name>Mn(2+)</name>
        <dbReference type="ChEBI" id="CHEBI:29035"/>
    </ligand>
</feature>
<gene>
    <name evidence="1" type="primary">rhaA</name>
    <name type="ordered locus">ECSE_4191</name>
</gene>
<keyword id="KW-0963">Cytoplasm</keyword>
<keyword id="KW-0413">Isomerase</keyword>
<keyword id="KW-0464">Manganese</keyword>
<keyword id="KW-0479">Metal-binding</keyword>
<keyword id="KW-0684">Rhamnose metabolism</keyword>
<protein>
    <recommendedName>
        <fullName evidence="1">L-rhamnose isomerase</fullName>
        <ecNumber evidence="1">5.3.1.14</ecNumber>
    </recommendedName>
</protein>
<evidence type="ECO:0000255" key="1">
    <source>
        <dbReference type="HAMAP-Rule" id="MF_00541"/>
    </source>
</evidence>
<dbReference type="EC" id="5.3.1.14" evidence="1"/>
<dbReference type="EMBL" id="AP009240">
    <property type="protein sequence ID" value="BAG79715.1"/>
    <property type="molecule type" value="Genomic_DNA"/>
</dbReference>
<dbReference type="RefSeq" id="WP_001325794.1">
    <property type="nucleotide sequence ID" value="NC_011415.1"/>
</dbReference>
<dbReference type="SMR" id="B6I4P5"/>
<dbReference type="GeneID" id="75204577"/>
<dbReference type="KEGG" id="ecy:ECSE_4191"/>
<dbReference type="HOGENOM" id="CLU_052790_0_0_6"/>
<dbReference type="UniPathway" id="UPA00541">
    <property type="reaction ID" value="UER00601"/>
</dbReference>
<dbReference type="Proteomes" id="UP000008199">
    <property type="component" value="Chromosome"/>
</dbReference>
<dbReference type="GO" id="GO:0005737">
    <property type="term" value="C:cytoplasm"/>
    <property type="evidence" value="ECO:0007669"/>
    <property type="project" value="UniProtKB-SubCell"/>
</dbReference>
<dbReference type="GO" id="GO:0008740">
    <property type="term" value="F:L-rhamnose isomerase activity"/>
    <property type="evidence" value="ECO:0007669"/>
    <property type="project" value="UniProtKB-UniRule"/>
</dbReference>
<dbReference type="GO" id="GO:0030145">
    <property type="term" value="F:manganese ion binding"/>
    <property type="evidence" value="ECO:0007669"/>
    <property type="project" value="UniProtKB-UniRule"/>
</dbReference>
<dbReference type="GO" id="GO:0019324">
    <property type="term" value="P:L-lyxose metabolic process"/>
    <property type="evidence" value="ECO:0007669"/>
    <property type="project" value="TreeGrafter"/>
</dbReference>
<dbReference type="GO" id="GO:0019301">
    <property type="term" value="P:rhamnose catabolic process"/>
    <property type="evidence" value="ECO:0007669"/>
    <property type="project" value="UniProtKB-UniRule"/>
</dbReference>
<dbReference type="FunFam" id="3.20.20.150:FF:000006">
    <property type="entry name" value="L-rhamnose isomerase"/>
    <property type="match status" value="1"/>
</dbReference>
<dbReference type="Gene3D" id="3.20.20.150">
    <property type="entry name" value="Divalent-metal-dependent TIM barrel enzymes"/>
    <property type="match status" value="1"/>
</dbReference>
<dbReference type="HAMAP" id="MF_00541">
    <property type="entry name" value="RhaA"/>
    <property type="match status" value="1"/>
</dbReference>
<dbReference type="InterPro" id="IPR050337">
    <property type="entry name" value="L-rhamnose_isomerase"/>
</dbReference>
<dbReference type="InterPro" id="IPR009308">
    <property type="entry name" value="Rhamnose_isomerase"/>
</dbReference>
<dbReference type="InterPro" id="IPR036237">
    <property type="entry name" value="Xyl_isomerase-like_sf"/>
</dbReference>
<dbReference type="NCBIfam" id="NF002203">
    <property type="entry name" value="PRK01076.1"/>
    <property type="match status" value="1"/>
</dbReference>
<dbReference type="NCBIfam" id="TIGR01748">
    <property type="entry name" value="rhaA"/>
    <property type="match status" value="1"/>
</dbReference>
<dbReference type="PANTHER" id="PTHR30268">
    <property type="entry name" value="L-RHAMNOSE ISOMERASE"/>
    <property type="match status" value="1"/>
</dbReference>
<dbReference type="PANTHER" id="PTHR30268:SF0">
    <property type="entry name" value="L-RHAMNOSE ISOMERASE"/>
    <property type="match status" value="1"/>
</dbReference>
<dbReference type="Pfam" id="PF06134">
    <property type="entry name" value="RhaA"/>
    <property type="match status" value="1"/>
</dbReference>
<dbReference type="SUPFAM" id="SSF51658">
    <property type="entry name" value="Xylose isomerase-like"/>
    <property type="match status" value="1"/>
</dbReference>
<reference key="1">
    <citation type="journal article" date="2008" name="DNA Res.">
        <title>Complete genome sequence and comparative analysis of the wild-type commensal Escherichia coli strain SE11 isolated from a healthy adult.</title>
        <authorList>
            <person name="Oshima K."/>
            <person name="Toh H."/>
            <person name="Ogura Y."/>
            <person name="Sasamoto H."/>
            <person name="Morita H."/>
            <person name="Park S.-H."/>
            <person name="Ooka T."/>
            <person name="Iyoda S."/>
            <person name="Taylor T.D."/>
            <person name="Hayashi T."/>
            <person name="Itoh K."/>
            <person name="Hattori M."/>
        </authorList>
    </citation>
    <scope>NUCLEOTIDE SEQUENCE [LARGE SCALE GENOMIC DNA]</scope>
    <source>
        <strain>SE11</strain>
    </source>
</reference>
<sequence>MTTQLEQAWELAKQRFAAVGIDVEEALRQLDRLPVSMHCWQGDDVSGFENPEGSLTGGIQATGNYPGKARNASELRTDLEQAMRLIPGPKRLNLHAIYLESDTPVSRDQIKPEHFKNWVEWAKANQLGLDFNPSCFSHPLSADGFTLSHADDSIRQFWIDHCKASRRVSAYFGEQLGTPSVMNIWIPDGMKDITVDRLAPRQRLLAALDEVISEKLNPAHHIDAVESKLFGIGAESYTVGSNEFYMGYATSRQTALCLDAGHFHPTEVISDKISAAMLYVPQLLLHVSRPVRWDSDHVVLLDDETQAIASEIVRHDLFDRVHIGLDFFDASINRIAAWVIGTRNMKKALLRALLEPTAELRKLEAAGDYTARLALLEEQKSLPWQAVWEMYCQRHDTPTGSEWLESVRAYEKAILSQRG</sequence>